<keyword id="KW-0007">Acetylation</keyword>
<keyword id="KW-0025">Alternative splicing</keyword>
<keyword id="KW-0131">Cell cycle</keyword>
<keyword id="KW-0132">Cell division</keyword>
<keyword id="KW-0963">Cytoplasm</keyword>
<keyword id="KW-0206">Cytoskeleton</keyword>
<keyword id="KW-0221">Differentiation</keyword>
<keyword id="KW-1017">Isopeptide bond</keyword>
<keyword id="KW-0489">Methyltransferase</keyword>
<keyword id="KW-0496">Mitochondrion</keyword>
<keyword id="KW-0498">Mitosis</keyword>
<keyword id="KW-0539">Nucleus</keyword>
<keyword id="KW-0597">Phosphoprotein</keyword>
<keyword id="KW-1185">Reference proteome</keyword>
<keyword id="KW-0694">RNA-binding</keyword>
<keyword id="KW-0949">S-adenosyl-L-methionine</keyword>
<keyword id="KW-0964">Secreted</keyword>
<keyword id="KW-0744">Spermatogenesis</keyword>
<keyword id="KW-0808">Transferase</keyword>
<keyword id="KW-0819">tRNA processing</keyword>
<keyword id="KW-0820">tRNA-binding</keyword>
<keyword id="KW-0832">Ubl conjugation</keyword>
<dbReference type="EC" id="2.1.1.-" evidence="8 10 13 14"/>
<dbReference type="EC" id="2.1.1.203" evidence="8"/>
<dbReference type="EMBL" id="DQ490066">
    <property type="protein sequence ID" value="ABF29536.1"/>
    <property type="molecule type" value="mRNA"/>
</dbReference>
<dbReference type="EMBL" id="AK030124">
    <property type="protein sequence ID" value="BAC26795.1"/>
    <property type="molecule type" value="mRNA"/>
</dbReference>
<dbReference type="EMBL" id="AK075999">
    <property type="protein sequence ID" value="BAC36110.1"/>
    <property type="status" value="ALT_INIT"/>
    <property type="molecule type" value="mRNA"/>
</dbReference>
<dbReference type="EMBL" id="AK150631">
    <property type="protein sequence ID" value="BAE29720.1"/>
    <property type="molecule type" value="mRNA"/>
</dbReference>
<dbReference type="EMBL" id="AK151917">
    <property type="protein sequence ID" value="BAE30795.1"/>
    <property type="molecule type" value="mRNA"/>
</dbReference>
<dbReference type="EMBL" id="BC013625">
    <property type="protein sequence ID" value="AAH13625.1"/>
    <property type="status" value="ALT_INIT"/>
    <property type="molecule type" value="mRNA"/>
</dbReference>
<dbReference type="EMBL" id="BC025549">
    <property type="protein sequence ID" value="AAH25549.1"/>
    <property type="status" value="ALT_SEQ"/>
    <property type="molecule type" value="mRNA"/>
</dbReference>
<dbReference type="CCDS" id="CCDS36722.2">
    <molecule id="Q1HFZ0-1"/>
</dbReference>
<dbReference type="RefSeq" id="NP_663329.3">
    <molecule id="Q1HFZ0-1"/>
    <property type="nucleotide sequence ID" value="NM_145354.5"/>
</dbReference>
<dbReference type="SMR" id="Q1HFZ0"/>
<dbReference type="BioGRID" id="205771">
    <property type="interactions" value="63"/>
</dbReference>
<dbReference type="FunCoup" id="Q1HFZ0">
    <property type="interactions" value="4508"/>
</dbReference>
<dbReference type="IntAct" id="Q1HFZ0">
    <property type="interactions" value="2"/>
</dbReference>
<dbReference type="MINT" id="Q1HFZ0"/>
<dbReference type="STRING" id="10090.ENSMUSP00000105321"/>
<dbReference type="GlyGen" id="Q1HFZ0">
    <property type="glycosylation" value="1 site, 1 O-linked glycan (1 site)"/>
</dbReference>
<dbReference type="iPTMnet" id="Q1HFZ0"/>
<dbReference type="MetOSite" id="Q1HFZ0"/>
<dbReference type="PhosphoSitePlus" id="Q1HFZ0"/>
<dbReference type="SwissPalm" id="Q1HFZ0"/>
<dbReference type="jPOST" id="Q1HFZ0"/>
<dbReference type="PaxDb" id="10090-ENSMUSP00000105321"/>
<dbReference type="PeptideAtlas" id="Q1HFZ0"/>
<dbReference type="ProteomicsDB" id="293756">
    <molecule id="Q1HFZ0-1"/>
</dbReference>
<dbReference type="ProteomicsDB" id="293757">
    <molecule id="Q1HFZ0-2"/>
</dbReference>
<dbReference type="Pumba" id="Q1HFZ0"/>
<dbReference type="Antibodypedia" id="22399">
    <property type="antibodies" value="179 antibodies from 28 providers"/>
</dbReference>
<dbReference type="DNASU" id="28114"/>
<dbReference type="Ensembl" id="ENSMUST00000022087.7">
    <molecule id="Q1HFZ0-2"/>
    <property type="protein sequence ID" value="ENSMUSP00000022087.7"/>
    <property type="gene ID" value="ENSMUSG00000021595.19"/>
</dbReference>
<dbReference type="Ensembl" id="ENSMUST00000109699.11">
    <molecule id="Q1HFZ0-1"/>
    <property type="protein sequence ID" value="ENSMUSP00000105321.5"/>
    <property type="gene ID" value="ENSMUSG00000021595.19"/>
</dbReference>
<dbReference type="GeneID" id="28114"/>
<dbReference type="KEGG" id="mmu:28114"/>
<dbReference type="UCSC" id="uc007rcm.3">
    <molecule id="Q1HFZ0-1"/>
    <property type="organism name" value="mouse"/>
</dbReference>
<dbReference type="AGR" id="MGI:107252"/>
<dbReference type="CTD" id="54888"/>
<dbReference type="MGI" id="MGI:107252">
    <property type="gene designation" value="Nsun2"/>
</dbReference>
<dbReference type="VEuPathDB" id="HostDB:ENSMUSG00000021595"/>
<dbReference type="eggNOG" id="KOG2198">
    <property type="taxonomic scope" value="Eukaryota"/>
</dbReference>
<dbReference type="GeneTree" id="ENSGT00940000153665"/>
<dbReference type="HOGENOM" id="CLU_005316_4_3_1"/>
<dbReference type="InParanoid" id="Q1HFZ0"/>
<dbReference type="OMA" id="QLFTEYV"/>
<dbReference type="OrthoDB" id="6093671at2759"/>
<dbReference type="PhylomeDB" id="Q1HFZ0"/>
<dbReference type="TreeFam" id="TF300702"/>
<dbReference type="BRENDA" id="2.1.1.37">
    <property type="organism ID" value="3474"/>
</dbReference>
<dbReference type="BioGRID-ORCS" id="28114">
    <property type="hits" value="3 hits in 80 CRISPR screens"/>
</dbReference>
<dbReference type="ChiTaRS" id="Nsun2">
    <property type="organism name" value="mouse"/>
</dbReference>
<dbReference type="PRO" id="PR:Q1HFZ0"/>
<dbReference type="Proteomes" id="UP000000589">
    <property type="component" value="Chromosome 13"/>
</dbReference>
<dbReference type="RNAct" id="Q1HFZ0">
    <property type="molecule type" value="protein"/>
</dbReference>
<dbReference type="Bgee" id="ENSMUSG00000021595">
    <property type="expression patterns" value="Expressed in cranial placode and 286 other cell types or tissues"/>
</dbReference>
<dbReference type="ExpressionAtlas" id="Q1HFZ0">
    <property type="expression patterns" value="baseline and differential"/>
</dbReference>
<dbReference type="GO" id="GO:0033391">
    <property type="term" value="C:chromatoid body"/>
    <property type="evidence" value="ECO:0000314"/>
    <property type="project" value="CACAO"/>
</dbReference>
<dbReference type="GO" id="GO:0070062">
    <property type="term" value="C:extracellular exosome"/>
    <property type="evidence" value="ECO:0000250"/>
    <property type="project" value="UniProtKB"/>
</dbReference>
<dbReference type="GO" id="GO:0005739">
    <property type="term" value="C:mitochondrion"/>
    <property type="evidence" value="ECO:0000250"/>
    <property type="project" value="UniProtKB"/>
</dbReference>
<dbReference type="GO" id="GO:0005730">
    <property type="term" value="C:nucleolus"/>
    <property type="evidence" value="ECO:0007669"/>
    <property type="project" value="UniProtKB-SubCell"/>
</dbReference>
<dbReference type="GO" id="GO:0005819">
    <property type="term" value="C:spindle"/>
    <property type="evidence" value="ECO:0007669"/>
    <property type="project" value="UniProtKB-SubCell"/>
</dbReference>
<dbReference type="GO" id="GO:0062152">
    <property type="term" value="F:mRNA (cytidine-5-)-methyltransferase activity"/>
    <property type="evidence" value="ECO:0000314"/>
    <property type="project" value="UniProtKB"/>
</dbReference>
<dbReference type="GO" id="GO:0016428">
    <property type="term" value="F:tRNA (cytidine-5-)-methyltransferase activity"/>
    <property type="evidence" value="ECO:0000314"/>
    <property type="project" value="UniProtKB"/>
</dbReference>
<dbReference type="GO" id="GO:0000049">
    <property type="term" value="F:tRNA binding"/>
    <property type="evidence" value="ECO:0007669"/>
    <property type="project" value="UniProtKB-KW"/>
</dbReference>
<dbReference type="GO" id="GO:0051301">
    <property type="term" value="P:cell division"/>
    <property type="evidence" value="ECO:0007669"/>
    <property type="project" value="UniProtKB-KW"/>
</dbReference>
<dbReference type="GO" id="GO:0048820">
    <property type="term" value="P:hair follicle maturation"/>
    <property type="evidence" value="ECO:0000315"/>
    <property type="project" value="UniProtKB"/>
</dbReference>
<dbReference type="GO" id="GO:0001701">
    <property type="term" value="P:in utero embryonic development"/>
    <property type="evidence" value="ECO:0000315"/>
    <property type="project" value="MGI"/>
</dbReference>
<dbReference type="GO" id="GO:0033313">
    <property type="term" value="P:meiotic cell cycle checkpoint signaling"/>
    <property type="evidence" value="ECO:0000315"/>
    <property type="project" value="CACAO"/>
</dbReference>
<dbReference type="GO" id="GO:0006397">
    <property type="term" value="P:mRNA processing"/>
    <property type="evidence" value="ECO:0000314"/>
    <property type="project" value="UniProtKB"/>
</dbReference>
<dbReference type="GO" id="GO:0010793">
    <property type="term" value="P:regulation of mRNA export from nucleus"/>
    <property type="evidence" value="ECO:0000250"/>
    <property type="project" value="UniProtKB"/>
</dbReference>
<dbReference type="GO" id="GO:2000736">
    <property type="term" value="P:regulation of stem cell differentiation"/>
    <property type="evidence" value="ECO:0000315"/>
    <property type="project" value="UniProtKB"/>
</dbReference>
<dbReference type="GO" id="GO:0007286">
    <property type="term" value="P:spermatid development"/>
    <property type="evidence" value="ECO:0000315"/>
    <property type="project" value="CACAO"/>
</dbReference>
<dbReference type="GO" id="GO:0030488">
    <property type="term" value="P:tRNA methylation"/>
    <property type="evidence" value="ECO:0000314"/>
    <property type="project" value="UniProtKB"/>
</dbReference>
<dbReference type="GO" id="GO:0008033">
    <property type="term" value="P:tRNA processing"/>
    <property type="evidence" value="ECO:0000314"/>
    <property type="project" value="UniProtKB"/>
</dbReference>
<dbReference type="GO" id="GO:0036416">
    <property type="term" value="P:tRNA stabilization"/>
    <property type="evidence" value="ECO:0000315"/>
    <property type="project" value="UniProtKB"/>
</dbReference>
<dbReference type="Gene3D" id="3.40.50.150">
    <property type="entry name" value="Vaccinia Virus protein VP39"/>
    <property type="match status" value="1"/>
</dbReference>
<dbReference type="InterPro" id="IPR049560">
    <property type="entry name" value="MeTrfase_RsmB-F_NOP2_cat"/>
</dbReference>
<dbReference type="InterPro" id="IPR001678">
    <property type="entry name" value="MeTrfase_RsmB-F_NOP2_dom"/>
</dbReference>
<dbReference type="InterPro" id="IPR023267">
    <property type="entry name" value="RCMT"/>
</dbReference>
<dbReference type="InterPro" id="IPR023270">
    <property type="entry name" value="RCMT_NCL1"/>
</dbReference>
<dbReference type="InterPro" id="IPR029063">
    <property type="entry name" value="SAM-dependent_MTases_sf"/>
</dbReference>
<dbReference type="PANTHER" id="PTHR22808">
    <property type="entry name" value="NCL1 YEAST -RELATED NOL1/NOP2/FMU SUN DOMAIN-CONTAINING"/>
    <property type="match status" value="1"/>
</dbReference>
<dbReference type="PANTHER" id="PTHR22808:SF20">
    <property type="entry name" value="RNA CYTOSINE C(5)-METHYLTRANSFERASE NSUN2"/>
    <property type="match status" value="1"/>
</dbReference>
<dbReference type="Pfam" id="PF01189">
    <property type="entry name" value="Methyltr_RsmB-F"/>
    <property type="match status" value="1"/>
</dbReference>
<dbReference type="Pfam" id="PF25376">
    <property type="entry name" value="Pre-PUA_NSUN2"/>
    <property type="match status" value="1"/>
</dbReference>
<dbReference type="Pfam" id="PF25378">
    <property type="entry name" value="PUA_NSUN2"/>
    <property type="match status" value="1"/>
</dbReference>
<dbReference type="PRINTS" id="PR02008">
    <property type="entry name" value="RCMTFAMILY"/>
</dbReference>
<dbReference type="PRINTS" id="PR02011">
    <property type="entry name" value="RCMTNCL1"/>
</dbReference>
<dbReference type="SUPFAM" id="SSF53335">
    <property type="entry name" value="S-adenosyl-L-methionine-dependent methyltransferases"/>
    <property type="match status" value="1"/>
</dbReference>
<dbReference type="PROSITE" id="PS51686">
    <property type="entry name" value="SAM_MT_RSMB_NOP"/>
    <property type="match status" value="1"/>
</dbReference>
<organism>
    <name type="scientific">Mus musculus</name>
    <name type="common">Mouse</name>
    <dbReference type="NCBI Taxonomy" id="10090"/>
    <lineage>
        <taxon>Eukaryota</taxon>
        <taxon>Metazoa</taxon>
        <taxon>Chordata</taxon>
        <taxon>Craniata</taxon>
        <taxon>Vertebrata</taxon>
        <taxon>Euteleostomi</taxon>
        <taxon>Mammalia</taxon>
        <taxon>Eutheria</taxon>
        <taxon>Euarchontoglires</taxon>
        <taxon>Glires</taxon>
        <taxon>Rodentia</taxon>
        <taxon>Myomorpha</taxon>
        <taxon>Muroidea</taxon>
        <taxon>Muridae</taxon>
        <taxon>Murinae</taxon>
        <taxon>Mus</taxon>
        <taxon>Mus</taxon>
    </lineage>
</organism>
<evidence type="ECO:0000250" key="1"/>
<evidence type="ECO:0000250" key="2">
    <source>
        <dbReference type="UniProtKB" id="Q08J23"/>
    </source>
</evidence>
<evidence type="ECO:0000255" key="3">
    <source>
        <dbReference type="PROSITE-ProRule" id="PRU01023"/>
    </source>
</evidence>
<evidence type="ECO:0000256" key="4">
    <source>
        <dbReference type="SAM" id="MobiDB-lite"/>
    </source>
</evidence>
<evidence type="ECO:0000269" key="5">
    <source>
    </source>
</evidence>
<evidence type="ECO:0000269" key="6">
    <source>
    </source>
</evidence>
<evidence type="ECO:0000269" key="7">
    <source>
    </source>
</evidence>
<evidence type="ECO:0000269" key="8">
    <source>
    </source>
</evidence>
<evidence type="ECO:0000269" key="9">
    <source>
    </source>
</evidence>
<evidence type="ECO:0000269" key="10">
    <source>
    </source>
</evidence>
<evidence type="ECO:0000269" key="11">
    <source>
    </source>
</evidence>
<evidence type="ECO:0000269" key="12">
    <source>
    </source>
</evidence>
<evidence type="ECO:0000269" key="13">
    <source>
    </source>
</evidence>
<evidence type="ECO:0000269" key="14">
    <source>
    </source>
</evidence>
<evidence type="ECO:0000303" key="15">
    <source>
    </source>
</evidence>
<evidence type="ECO:0000303" key="16">
    <source>
    </source>
</evidence>
<evidence type="ECO:0000305" key="17"/>
<evidence type="ECO:0000312" key="18">
    <source>
        <dbReference type="MGI" id="MGI:107252"/>
    </source>
</evidence>
<evidence type="ECO:0007744" key="19">
    <source>
    </source>
</evidence>
<evidence type="ECO:0007744" key="20">
    <source>
    </source>
</evidence>
<evidence type="ECO:0007744" key="21">
    <source>
    </source>
</evidence>
<evidence type="ECO:0007744" key="22">
    <source>
    </source>
</evidence>
<evidence type="ECO:0007744" key="23">
    <source>
    </source>
</evidence>
<gene>
    <name evidence="16 18" type="primary">Nsun2</name>
    <name evidence="18" type="synonym">D13Wsu123e</name>
    <name evidence="16" type="synonym">Misu</name>
</gene>
<comment type="function">
    <text evidence="2 5 6 7 8 9 10 12 13 14">RNA cytosine C(5)-methyltransferase that methylates cytosine to 5-methylcytosine (m5C) in various RNAs, such as tRNAs, mRNAs and some long non-coding RNAs (lncRNAs) (PubMed:22144916, PubMed:23871666, PubMed:31199786). Involved in various processes, such as epidermal stem cell differentiation, testis differentiation and maternal to zygotic transition during early development: acts by increasing protein synthesis; cytosine C(5)-methylation promoting tRNA stability and preventing mRNA decay (PubMed:22144916, PubMed:22885326, PubMed:23401851, PubMed:31199786). Methylates cytosine to 5-methylcytosine (m5C) at positions 34 and 48 of intron-containing tRNA(Leu)(CAA) precursors, and at positions 48, 49 and 50 of tRNA(Gly)(GCC) precursors (PubMed:22885326, PubMed:23871666, PubMed:31199786). tRNA methylation is required generation of RNA fragments derived from tRNAs (tRFs) (PubMed:31199786). Also mediates C(5)-methylation of mitochondrial tRNAs (PubMed:31276587, PubMed:31287866). Catalyzes cytosine C(5)-methylation of mRNAs, leading to stabilize them and prevent mRNA decay: mRNA stabilization involves YBX1 that specifically recognizes and binds m5C-modified transcripts (By similarity). Cytosine C(5)-methylation of mRNAs also regulates mRNA export: methylated transcripts are specifically recognized by THOC4/ALYREF, which mediates mRNA nucleo-cytoplasmic shuttling (By similarity). Also mediates cytosine C(5)-methylation of non-coding RNAs, such as vault RNAs (vtRNAs), promoting their processing into regulatory small RNAs (PubMed:23871666). Cytosine C(5)-methylation of vtRNA VTRNA1.1 promotes its processing into small-vault RNA4 (svRNA4) and regulates epidermal differentiation (By similarity). May act downstream of Myc to regulate epidermal cell growth and proliferation (PubMed:16713953). Required for proper spindle assembly and chromosome segregation, independently of its methyltransferase activity (PubMed:19596847).</text>
</comment>
<comment type="catalytic activity">
    <reaction evidence="8 10 13 14">
        <text>cytidine(48) in tRNA + S-adenosyl-L-methionine = 5-methylcytidine(48) in tRNA + S-adenosyl-L-homocysteine + H(+)</text>
        <dbReference type="Rhea" id="RHEA:42948"/>
        <dbReference type="Rhea" id="RHEA-COMP:10293"/>
        <dbReference type="Rhea" id="RHEA-COMP:10297"/>
        <dbReference type="ChEBI" id="CHEBI:15378"/>
        <dbReference type="ChEBI" id="CHEBI:57856"/>
        <dbReference type="ChEBI" id="CHEBI:59789"/>
        <dbReference type="ChEBI" id="CHEBI:74483"/>
        <dbReference type="ChEBI" id="CHEBI:82748"/>
    </reaction>
    <physiologicalReaction direction="left-to-right" evidence="8 10 13 14">
        <dbReference type="Rhea" id="RHEA:42949"/>
    </physiologicalReaction>
</comment>
<comment type="catalytic activity">
    <reaction evidence="8 10 13 14">
        <text>cytidine(49) in tRNA + S-adenosyl-L-methionine = 5-methylcytidine(49) in tRNA + S-adenosyl-L-homocysteine + H(+)</text>
        <dbReference type="Rhea" id="RHEA:42952"/>
        <dbReference type="Rhea" id="RHEA-COMP:10294"/>
        <dbReference type="Rhea" id="RHEA-COMP:10385"/>
        <dbReference type="ChEBI" id="CHEBI:15378"/>
        <dbReference type="ChEBI" id="CHEBI:57856"/>
        <dbReference type="ChEBI" id="CHEBI:59789"/>
        <dbReference type="ChEBI" id="CHEBI:74483"/>
        <dbReference type="ChEBI" id="CHEBI:82748"/>
    </reaction>
    <physiologicalReaction direction="left-to-right" evidence="8 10 13 14">
        <dbReference type="Rhea" id="RHEA:42953"/>
    </physiologicalReaction>
</comment>
<comment type="catalytic activity">
    <reaction evidence="8 10 13 14">
        <text>cytidine(50) in tRNA + S-adenosyl-L-methionine = 5-methylcytidine(50) in tRNA + S-adenosyl-L-homocysteine + H(+)</text>
        <dbReference type="Rhea" id="RHEA:61488"/>
        <dbReference type="Rhea" id="RHEA-COMP:15838"/>
        <dbReference type="Rhea" id="RHEA-COMP:15839"/>
        <dbReference type="ChEBI" id="CHEBI:15378"/>
        <dbReference type="ChEBI" id="CHEBI:57856"/>
        <dbReference type="ChEBI" id="CHEBI:59789"/>
        <dbReference type="ChEBI" id="CHEBI:74483"/>
        <dbReference type="ChEBI" id="CHEBI:82748"/>
    </reaction>
    <physiologicalReaction direction="left-to-right" evidence="8 10 13 14">
        <dbReference type="Rhea" id="RHEA:61489"/>
    </physiologicalReaction>
</comment>
<comment type="catalytic activity">
    <reaction evidence="8">
        <text>cytidine(34) in tRNA precursor + S-adenosyl-L-methionine = 5-methylcytidine(34) in tRNA precursor + S-adenosyl-L-homocysteine + H(+)</text>
        <dbReference type="Rhea" id="RHEA:42940"/>
        <dbReference type="Rhea" id="RHEA-COMP:10291"/>
        <dbReference type="Rhea" id="RHEA-COMP:10295"/>
        <dbReference type="ChEBI" id="CHEBI:15378"/>
        <dbReference type="ChEBI" id="CHEBI:57856"/>
        <dbReference type="ChEBI" id="CHEBI:59789"/>
        <dbReference type="ChEBI" id="CHEBI:74483"/>
        <dbReference type="ChEBI" id="CHEBI:82748"/>
        <dbReference type="EC" id="2.1.1.203"/>
    </reaction>
    <physiologicalReaction direction="left-to-right" evidence="8">
        <dbReference type="Rhea" id="RHEA:42941"/>
    </physiologicalReaction>
</comment>
<comment type="catalytic activity">
    <reaction evidence="10">
        <text>a cytidine in mRNA + S-adenosyl-L-methionine = a 5-methylcytidine in mRNA + S-adenosyl-L-homocysteine + H(+)</text>
        <dbReference type="Rhea" id="RHEA:61464"/>
        <dbReference type="Rhea" id="RHEA-COMP:15145"/>
        <dbReference type="Rhea" id="RHEA-COMP:15826"/>
        <dbReference type="ChEBI" id="CHEBI:15378"/>
        <dbReference type="ChEBI" id="CHEBI:57856"/>
        <dbReference type="ChEBI" id="CHEBI:59789"/>
        <dbReference type="ChEBI" id="CHEBI:74483"/>
        <dbReference type="ChEBI" id="CHEBI:82748"/>
    </reaction>
    <physiologicalReaction direction="left-to-right" evidence="10">
        <dbReference type="Rhea" id="RHEA:61465"/>
    </physiologicalReaction>
</comment>
<comment type="activity regulation">
    <text evidence="2">Inhibited by magnesium ions.</text>
</comment>
<comment type="subunit">
    <text evidence="2">Interacts with NPM1 and NCL during interphase; interaction is disrupted following phosphorylation at Ser-139.</text>
</comment>
<comment type="subcellular location">
    <subcellularLocation>
        <location evidence="5 6">Nucleus</location>
        <location evidence="5 6">Nucleolus</location>
    </subcellularLocation>
    <subcellularLocation>
        <location evidence="2">Cytoplasm</location>
    </subcellularLocation>
    <subcellularLocation>
        <location evidence="2">Mitochondrion</location>
    </subcellularLocation>
    <subcellularLocation>
        <location evidence="6">Cytoplasm</location>
        <location evidence="6">Cytoskeleton</location>
        <location evidence="6">Spindle</location>
    </subcellularLocation>
    <subcellularLocation>
        <location evidence="11">Secreted</location>
        <location evidence="11">Extracellular exosome</location>
    </subcellularLocation>
    <text evidence="6 9">Concentrated in the nucleolus during interphase and translocates to the spindle during mitosis as an RNA-protein complex that includes 18S ribosomal RNA (PubMed:19596847). In testis, localizes to the chromatoid body (PubMed:23401851).</text>
</comment>
<comment type="alternative products">
    <event type="alternative splicing"/>
    <isoform>
        <id>Q1HFZ0-1</id>
        <name>1</name>
        <sequence type="displayed"/>
    </isoform>
    <isoform>
        <id>Q1HFZ0-2</id>
        <name>2</name>
        <sequence type="described" ref="VSP_025969"/>
    </isoform>
</comment>
<comment type="tissue specificity">
    <text evidence="5 7">Ubiquitously expressed at low level (PubMed:16713953). Up-regulated in tumors (PubMed:16713953). Dynamically expressed during morphogenesis and in adult skin: in adult skin, expression is up-regulated in the bulge and hair germ as soon as the hair follicle enters its growing phase (anagen) (PubMed:22144916). During anagen, expressed at highest level in cells of the hair germ that give rise to the hair matrix (PubMed:22144916).</text>
</comment>
<comment type="developmental stage">
    <text evidence="7">Detected from 3.5 dpc in the inner cell mass of the blastocyst (PubMed:22144916). Expressed throughout the extra-embryonic ectoderm, which gives rise to the nervous system and epidermis, after implantation and gastrulation (PubMed:22144916). Starting from 9.5 dpc, expression becomes more restricted and at 13.5 and 14.5 dpc it is enriched in developing whiskers and eyes (PubMed:22144916). From 15.5 dpc, when the interfollicular epidermis begins to stratify and follicular morphogenesis starts by forming hair placodes, highest expression is observed in the suprabasal layer of interfollicular epidermis (PubMed:22144916).</text>
</comment>
<comment type="induction">
    <text evidence="5">By Myc (at protein level).</text>
</comment>
<comment type="PTM">
    <text evidence="2">Phosphorylated at Ser-139 by AURKB during mitosis, leading to abolish methyltransferase activity and the interaction with NPM1.</text>
</comment>
<comment type="disruption phenotype">
    <text evidence="7 8 9">Mice are viable but show male sterility (PubMed:22144916, PubMed:23401851). Mice display reduced body weight and partial alopecia; alopecia is caused by impaired stem cell differentiation in the epidermis, leading to a delay in initiation of anagen (PubMed:22144916). Mice lacking both Nsun2 and Trdmt1 display a complete loss of cytosine-C5 tRNA methylation, leading to development defects and impaired cellular differentiation causing lethality before P3 (PubMed:22885326). Male sterility is caused by impaired germ cell differentiation in the testis: meiotic progression of germ cells is blocked into the pachytene stage, while spermatogonial and Sertoli cells are unaffected (PubMed:23401851).</text>
</comment>
<comment type="similarity">
    <text evidence="3">Belongs to the class I-like SAM-binding methyltransferase superfamily. RsmB/NOP family. TRM4 subfamily.</text>
</comment>
<comment type="sequence caution" evidence="17">
    <conflict type="erroneous initiation">
        <sequence resource="EMBL-CDS" id="AAH13625"/>
    </conflict>
</comment>
<comment type="sequence caution" evidence="17">
    <conflict type="miscellaneous discrepancy">
        <sequence resource="EMBL-CDS" id="AAH25549"/>
    </conflict>
    <text>Contaminating sequence. Potential poly-A sequence.</text>
</comment>
<comment type="sequence caution" evidence="17">
    <conflict type="erroneous initiation">
        <sequence resource="EMBL-CDS" id="BAC36110"/>
    </conflict>
</comment>
<name>NSUN2_MOUSE</name>
<reference key="1">
    <citation type="journal article" date="2006" name="Curr. Biol.">
        <title>The RNA methyltransferase Misu (NSun2) mediates Myc-induced proliferation and is upregulated in tumors.</title>
        <authorList>
            <person name="Frye M."/>
            <person name="Watt F.M."/>
        </authorList>
    </citation>
    <scope>NUCLEOTIDE SEQUENCE [MRNA] (ISOFORM 1)</scope>
    <scope>FUNCTION</scope>
    <scope>SUBCELLULAR LOCATION</scope>
    <scope>TISSUE SPECIFICITY</scope>
    <scope>INDUCTION</scope>
</reference>
<reference key="2">
    <citation type="journal article" date="2005" name="Science">
        <title>The transcriptional landscape of the mammalian genome.</title>
        <authorList>
            <person name="Carninci P."/>
            <person name="Kasukawa T."/>
            <person name="Katayama S."/>
            <person name="Gough J."/>
            <person name="Frith M.C."/>
            <person name="Maeda N."/>
            <person name="Oyama R."/>
            <person name="Ravasi T."/>
            <person name="Lenhard B."/>
            <person name="Wells C."/>
            <person name="Kodzius R."/>
            <person name="Shimokawa K."/>
            <person name="Bajic V.B."/>
            <person name="Brenner S.E."/>
            <person name="Batalov S."/>
            <person name="Forrest A.R."/>
            <person name="Zavolan M."/>
            <person name="Davis M.J."/>
            <person name="Wilming L.G."/>
            <person name="Aidinis V."/>
            <person name="Allen J.E."/>
            <person name="Ambesi-Impiombato A."/>
            <person name="Apweiler R."/>
            <person name="Aturaliya R.N."/>
            <person name="Bailey T.L."/>
            <person name="Bansal M."/>
            <person name="Baxter L."/>
            <person name="Beisel K.W."/>
            <person name="Bersano T."/>
            <person name="Bono H."/>
            <person name="Chalk A.M."/>
            <person name="Chiu K.P."/>
            <person name="Choudhary V."/>
            <person name="Christoffels A."/>
            <person name="Clutterbuck D.R."/>
            <person name="Crowe M.L."/>
            <person name="Dalla E."/>
            <person name="Dalrymple B.P."/>
            <person name="de Bono B."/>
            <person name="Della Gatta G."/>
            <person name="di Bernardo D."/>
            <person name="Down T."/>
            <person name="Engstrom P."/>
            <person name="Fagiolini M."/>
            <person name="Faulkner G."/>
            <person name="Fletcher C.F."/>
            <person name="Fukushima T."/>
            <person name="Furuno M."/>
            <person name="Futaki S."/>
            <person name="Gariboldi M."/>
            <person name="Georgii-Hemming P."/>
            <person name="Gingeras T.R."/>
            <person name="Gojobori T."/>
            <person name="Green R.E."/>
            <person name="Gustincich S."/>
            <person name="Harbers M."/>
            <person name="Hayashi Y."/>
            <person name="Hensch T.K."/>
            <person name="Hirokawa N."/>
            <person name="Hill D."/>
            <person name="Huminiecki L."/>
            <person name="Iacono M."/>
            <person name="Ikeo K."/>
            <person name="Iwama A."/>
            <person name="Ishikawa T."/>
            <person name="Jakt M."/>
            <person name="Kanapin A."/>
            <person name="Katoh M."/>
            <person name="Kawasawa Y."/>
            <person name="Kelso J."/>
            <person name="Kitamura H."/>
            <person name="Kitano H."/>
            <person name="Kollias G."/>
            <person name="Krishnan S.P."/>
            <person name="Kruger A."/>
            <person name="Kummerfeld S.K."/>
            <person name="Kurochkin I.V."/>
            <person name="Lareau L.F."/>
            <person name="Lazarevic D."/>
            <person name="Lipovich L."/>
            <person name="Liu J."/>
            <person name="Liuni S."/>
            <person name="McWilliam S."/>
            <person name="Madan Babu M."/>
            <person name="Madera M."/>
            <person name="Marchionni L."/>
            <person name="Matsuda H."/>
            <person name="Matsuzawa S."/>
            <person name="Miki H."/>
            <person name="Mignone F."/>
            <person name="Miyake S."/>
            <person name="Morris K."/>
            <person name="Mottagui-Tabar S."/>
            <person name="Mulder N."/>
            <person name="Nakano N."/>
            <person name="Nakauchi H."/>
            <person name="Ng P."/>
            <person name="Nilsson R."/>
            <person name="Nishiguchi S."/>
            <person name="Nishikawa S."/>
            <person name="Nori F."/>
            <person name="Ohara O."/>
            <person name="Okazaki Y."/>
            <person name="Orlando V."/>
            <person name="Pang K.C."/>
            <person name="Pavan W.J."/>
            <person name="Pavesi G."/>
            <person name="Pesole G."/>
            <person name="Petrovsky N."/>
            <person name="Piazza S."/>
            <person name="Reed J."/>
            <person name="Reid J.F."/>
            <person name="Ring B.Z."/>
            <person name="Ringwald M."/>
            <person name="Rost B."/>
            <person name="Ruan Y."/>
            <person name="Salzberg S.L."/>
            <person name="Sandelin A."/>
            <person name="Schneider C."/>
            <person name="Schoenbach C."/>
            <person name="Sekiguchi K."/>
            <person name="Semple C.A."/>
            <person name="Seno S."/>
            <person name="Sessa L."/>
            <person name="Sheng Y."/>
            <person name="Shibata Y."/>
            <person name="Shimada H."/>
            <person name="Shimada K."/>
            <person name="Silva D."/>
            <person name="Sinclair B."/>
            <person name="Sperling S."/>
            <person name="Stupka E."/>
            <person name="Sugiura K."/>
            <person name="Sultana R."/>
            <person name="Takenaka Y."/>
            <person name="Taki K."/>
            <person name="Tammoja K."/>
            <person name="Tan S.L."/>
            <person name="Tang S."/>
            <person name="Taylor M.S."/>
            <person name="Tegner J."/>
            <person name="Teichmann S.A."/>
            <person name="Ueda H.R."/>
            <person name="van Nimwegen E."/>
            <person name="Verardo R."/>
            <person name="Wei C.L."/>
            <person name="Yagi K."/>
            <person name="Yamanishi H."/>
            <person name="Zabarovsky E."/>
            <person name="Zhu S."/>
            <person name="Zimmer A."/>
            <person name="Hide W."/>
            <person name="Bult C."/>
            <person name="Grimmond S.M."/>
            <person name="Teasdale R.D."/>
            <person name="Liu E.T."/>
            <person name="Brusic V."/>
            <person name="Quackenbush J."/>
            <person name="Wahlestedt C."/>
            <person name="Mattick J.S."/>
            <person name="Hume D.A."/>
            <person name="Kai C."/>
            <person name="Sasaki D."/>
            <person name="Tomaru Y."/>
            <person name="Fukuda S."/>
            <person name="Kanamori-Katayama M."/>
            <person name="Suzuki M."/>
            <person name="Aoki J."/>
            <person name="Arakawa T."/>
            <person name="Iida J."/>
            <person name="Imamura K."/>
            <person name="Itoh M."/>
            <person name="Kato T."/>
            <person name="Kawaji H."/>
            <person name="Kawagashira N."/>
            <person name="Kawashima T."/>
            <person name="Kojima M."/>
            <person name="Kondo S."/>
            <person name="Konno H."/>
            <person name="Nakano K."/>
            <person name="Ninomiya N."/>
            <person name="Nishio T."/>
            <person name="Okada M."/>
            <person name="Plessy C."/>
            <person name="Shibata K."/>
            <person name="Shiraki T."/>
            <person name="Suzuki S."/>
            <person name="Tagami M."/>
            <person name="Waki K."/>
            <person name="Watahiki A."/>
            <person name="Okamura-Oho Y."/>
            <person name="Suzuki H."/>
            <person name="Kawai J."/>
            <person name="Hayashizaki Y."/>
        </authorList>
    </citation>
    <scope>NUCLEOTIDE SEQUENCE [LARGE SCALE MRNA] (ISOFORMS 1 AND 2)</scope>
    <source>
        <strain>C57BL/6J</strain>
        <tissue>Bone marrow</tissue>
        <tissue>Testis</tissue>
    </source>
</reference>
<reference key="3">
    <citation type="journal article" date="2004" name="Genome Res.">
        <title>The status, quality, and expansion of the NIH full-length cDNA project: the Mammalian Gene Collection (MGC).</title>
        <authorList>
            <consortium name="The MGC Project Team"/>
        </authorList>
    </citation>
    <scope>NUCLEOTIDE SEQUENCE [LARGE SCALE MRNA] (ISOFORM 1)</scope>
    <source>
        <strain>Czech II</strain>
        <strain>FVB/N</strain>
        <tissue>Mammary tumor</tissue>
    </source>
</reference>
<reference key="4">
    <citation type="journal article" date="2004" name="Mol. Cell. Proteomics">
        <title>Phosphoproteomic analysis of the developing mouse brain.</title>
        <authorList>
            <person name="Ballif B.A."/>
            <person name="Villen J."/>
            <person name="Beausoleil S.A."/>
            <person name="Schwartz D."/>
            <person name="Gygi S.P."/>
        </authorList>
    </citation>
    <scope>PHOSPHORYLATION [LARGE SCALE ANALYSIS] AT SER-723</scope>
    <scope>IDENTIFICATION BY MASS SPECTROMETRY [LARGE SCALE ANALYSIS]</scope>
    <source>
        <tissue>Embryonic brain</tissue>
    </source>
</reference>
<reference key="5">
    <citation type="journal article" date="2007" name="Proc. Natl. Acad. Sci. U.S.A.">
        <title>Large-scale phosphorylation analysis of mouse liver.</title>
        <authorList>
            <person name="Villen J."/>
            <person name="Beausoleil S.A."/>
            <person name="Gerber S.A."/>
            <person name="Gygi S.P."/>
        </authorList>
    </citation>
    <scope>PHOSPHORYLATION [LARGE SCALE ANALYSIS] AT SER-23</scope>
    <scope>IDENTIFICATION BY MASS SPECTROMETRY [LARGE SCALE ANALYSIS]</scope>
    <source>
        <tissue>Liver</tissue>
    </source>
</reference>
<reference key="6">
    <citation type="journal article" date="2009" name="Immunity">
        <title>The phagosomal proteome in interferon-gamma-activated macrophages.</title>
        <authorList>
            <person name="Trost M."/>
            <person name="English L."/>
            <person name="Lemieux S."/>
            <person name="Courcelles M."/>
            <person name="Desjardins M."/>
            <person name="Thibault P."/>
        </authorList>
    </citation>
    <scope>PHOSPHORYLATION [LARGE SCALE ANALYSIS] AT SER-723</scope>
    <scope>IDENTIFICATION BY MASS SPECTROMETRY [LARGE SCALE ANALYSIS]</scope>
</reference>
<reference key="7">
    <citation type="journal article" date="2009" name="J. Cell Biol.">
        <title>The nucleolar RNA methyltransferase Misu (NSun2) is required for mitotic spindle stability.</title>
        <authorList>
            <person name="Hussain S."/>
            <person name="Benavente S.B."/>
            <person name="Nascimento E."/>
            <person name="Dragoni I."/>
            <person name="Kurowski A."/>
            <person name="Gillich A."/>
            <person name="Humphreys P."/>
            <person name="Frye M."/>
        </authorList>
    </citation>
    <scope>FUNCTION</scope>
    <scope>SUBCELLULAR LOCATION</scope>
</reference>
<reference key="8">
    <citation type="journal article" date="2010" name="Cell">
        <title>A tissue-specific atlas of mouse protein phosphorylation and expression.</title>
        <authorList>
            <person name="Huttlin E.L."/>
            <person name="Jedrychowski M.P."/>
            <person name="Elias J.E."/>
            <person name="Goswami T."/>
            <person name="Rad R."/>
            <person name="Beausoleil S.A."/>
            <person name="Villen J."/>
            <person name="Haas W."/>
            <person name="Sowa M.E."/>
            <person name="Gygi S.P."/>
        </authorList>
    </citation>
    <scope>PHOSPHORYLATION [LARGE SCALE ANALYSIS] AT SER-23; THR-717 AND SER-723</scope>
    <scope>IDENTIFICATION BY MASS SPECTROMETRY [LARGE SCALE ANALYSIS]</scope>
    <source>
        <tissue>Brain</tissue>
        <tissue>Brown adipose tissue</tissue>
        <tissue>Heart</tissue>
        <tissue>Kidney</tissue>
        <tissue>Liver</tissue>
        <tissue>Lung</tissue>
        <tissue>Pancreas</tissue>
        <tissue>Spleen</tissue>
        <tissue>Testis</tissue>
    </source>
</reference>
<reference key="9">
    <citation type="journal article" date="2011" name="PLoS Genet.">
        <title>The RNA-methyltransferase Misu (NSun2) poises epidermal stem cells to differentiate.</title>
        <authorList>
            <person name="Blanco S."/>
            <person name="Kurowski A."/>
            <person name="Nichols J."/>
            <person name="Watt F.M."/>
            <person name="Benitah S.A."/>
            <person name="Frye M."/>
        </authorList>
    </citation>
    <scope>FUNCTION</scope>
    <scope>TISSUE SPECIFICITY</scope>
    <scope>DEVELOPMENTAL STAGE</scope>
    <scope>DISRUPTION PHENOTYPE</scope>
</reference>
<reference key="10">
    <citation type="journal article" date="2012" name="Nat. Struct. Mol. Biol.">
        <title>RNA cytosine methylation by Dnmt2 and NSun2 promotes tRNA stability and protein synthesis.</title>
        <authorList>
            <person name="Tuorto F."/>
            <person name="Liebers R."/>
            <person name="Musch T."/>
            <person name="Schaefer M."/>
            <person name="Hofmann S."/>
            <person name="Kellner S."/>
            <person name="Frye M."/>
            <person name="Helm M."/>
            <person name="Stoecklin G."/>
            <person name="Lyko F."/>
        </authorList>
    </citation>
    <scope>FUNCTION</scope>
    <scope>CATALYTIC ACTIVITY</scope>
    <scope>DISRUPTION PHENOTYPE</scope>
</reference>
<reference key="11">
    <citation type="journal article" date="2013" name="Cell Rep.">
        <title>NSun2-mediated cytosine-5 methylation of vault noncoding RNA determines its processing into regulatory small RNAs.</title>
        <authorList>
            <person name="Hussain S."/>
            <person name="Sajini A.A."/>
            <person name="Blanco S."/>
            <person name="Dietmann S."/>
            <person name="Lombard P."/>
            <person name="Sugimoto Y."/>
            <person name="Paramor M."/>
            <person name="Gleeson J.G."/>
            <person name="Odom D.T."/>
            <person name="Ule J."/>
            <person name="Frye M."/>
        </authorList>
    </citation>
    <scope>FUNCTION</scope>
    <scope>CATALYTIC ACTIVITY</scope>
    <scope>MUTAGENESIS OF CYS-271</scope>
</reference>
<reference key="12">
    <citation type="journal article" date="2013" name="Mol. Cell. Biol.">
        <title>The mouse cytosine-5 RNA methyltransferase NSun2 is a component of the chromatoid body and required for testis differentiation.</title>
        <authorList>
            <person name="Hussain S."/>
            <person name="Tuorto F."/>
            <person name="Menon S."/>
            <person name="Blanco S."/>
            <person name="Cox C."/>
            <person name="Flores J.V."/>
            <person name="Watt S."/>
            <person name="Kudo N.R."/>
            <person name="Lyko F."/>
            <person name="Frye M."/>
        </authorList>
    </citation>
    <scope>DISRUPTION PHENOTYPE</scope>
    <scope>SUBCELLULAR LOCATION</scope>
</reference>
<reference key="13">
    <citation type="journal article" date="2013" name="Mol. Cell">
        <title>SIRT5-mediated lysine desuccinylation impacts diverse metabolic pathways.</title>
        <authorList>
            <person name="Park J."/>
            <person name="Chen Y."/>
            <person name="Tishkoff D.X."/>
            <person name="Peng C."/>
            <person name="Tan M."/>
            <person name="Dai L."/>
            <person name="Xie Z."/>
            <person name="Zhang Y."/>
            <person name="Zwaans B.M."/>
            <person name="Skinner M.E."/>
            <person name="Lombard D.B."/>
            <person name="Zhao Y."/>
        </authorList>
    </citation>
    <scope>ACETYLATION [LARGE SCALE ANALYSIS] AT LYS-585</scope>
    <scope>IDENTIFICATION BY MASS SPECTROMETRY [LARGE SCALE ANALYSIS]</scope>
    <source>
        <tissue>Embryonic fibroblast</tissue>
    </source>
</reference>
<reference key="14">
    <citation type="journal article" date="2017" name="Biochim. Biophys. Acta">
        <title>Cytosolic YB-1 and NSUN2 are the only proteins recognizing specific motifs present in mRNAs enriched in exosomes.</title>
        <authorList>
            <person name="Kossinova O.A."/>
            <person name="Gopanenko A.V."/>
            <person name="Tamkovich S.N."/>
            <person name="Krasheninina O.A."/>
            <person name="Tupikin A.E."/>
            <person name="Kiseleva E."/>
            <person name="Yanshina D.D."/>
            <person name="Malygin A.A."/>
            <person name="Ven'yaminova A.G."/>
            <person name="Kabilov M.R."/>
            <person name="Karpova G.G."/>
        </authorList>
    </citation>
    <scope>SUBCELLULAR LOCATION</scope>
</reference>
<reference key="15">
    <citation type="journal article" date="2019" name="Nucleic Acids Res.">
        <title>NSUN2 introduces 5-methylcytosines in mammalian mitochondrial tRNAs.</title>
        <authorList>
            <person name="Van Haute L."/>
            <person name="Lee S.Y."/>
            <person name="McCann B.J."/>
            <person name="Powell C.A."/>
            <person name="Bansal D."/>
            <person name="Vasiliauskaite L."/>
            <person name="Garone C."/>
            <person name="Shin S."/>
            <person name="Kim J.S."/>
            <person name="Frye M."/>
            <person name="Gleeson J.G."/>
            <person name="Miska E.A."/>
            <person name="Rhee H.W."/>
            <person name="Minczuk M."/>
        </authorList>
    </citation>
    <scope>FUNCTION</scope>
    <scope>CATALYTIC ACTIVITY</scope>
</reference>
<reference key="16">
    <citation type="journal article" date="2019" name="Nucleic Acids Res.">
        <title>Mammalian NSUN2 introduces 5-methylcytidines into mitochondrial tRNAs.</title>
        <authorList>
            <person name="Shinoda S."/>
            <person name="Kitagawa S."/>
            <person name="Nakagawa S."/>
            <person name="Wei F.Y."/>
            <person name="Tomizawa K."/>
            <person name="Araki K."/>
            <person name="Araki M."/>
            <person name="Suzuki T."/>
            <person name="Suzuki T."/>
        </authorList>
    </citation>
    <scope>FUNCTION</scope>
    <scope>CATALYTIC ACTIVITY</scope>
</reference>
<reference key="17">
    <citation type="journal article" date="2019" name="PLoS Biol.">
        <title>Cytosine-5 RNA methylation links protein synthesis to cell metabolism.</title>
        <authorList>
            <person name="Gkatza N.A."/>
            <person name="Castro C."/>
            <person name="Harvey R.F."/>
            <person name="Heiss M."/>
            <person name="Popis M.C."/>
            <person name="Blanco S."/>
            <person name="Borneloev S."/>
            <person name="Sajini A.A."/>
            <person name="Gleeson J.G."/>
            <person name="Griffin J.L."/>
            <person name="West J.A."/>
            <person name="Kellner S."/>
            <person name="Willis A.E."/>
            <person name="Dietmann S."/>
            <person name="Frye M."/>
        </authorList>
    </citation>
    <scope>FUNCTION</scope>
</reference>
<feature type="chain" id="PRO_0000289224" description="RNA cytosine C(5)-methyltransferase NSUN2">
    <location>
        <begin position="1"/>
        <end position="757"/>
    </location>
</feature>
<feature type="region of interest" description="Disordered" evidence="4">
    <location>
        <begin position="1"/>
        <end position="35"/>
    </location>
</feature>
<feature type="region of interest" description="Disordered" evidence="4">
    <location>
        <begin position="436"/>
        <end position="504"/>
    </location>
</feature>
<feature type="region of interest" description="Disordered" evidence="4">
    <location>
        <begin position="716"/>
        <end position="757"/>
    </location>
</feature>
<feature type="compositionally biased region" description="Polar residues" evidence="4">
    <location>
        <begin position="463"/>
        <end position="476"/>
    </location>
</feature>
<feature type="active site" description="Nucleophile" evidence="3">
    <location>
        <position position="321"/>
    </location>
</feature>
<feature type="binding site" evidence="3">
    <location>
        <begin position="184"/>
        <end position="190"/>
    </location>
    <ligand>
        <name>S-adenosyl-L-methionine</name>
        <dbReference type="ChEBI" id="CHEBI:59789"/>
    </ligand>
</feature>
<feature type="binding site" evidence="3">
    <location>
        <position position="215"/>
    </location>
    <ligand>
        <name>S-adenosyl-L-methionine</name>
        <dbReference type="ChEBI" id="CHEBI:59789"/>
    </ligand>
</feature>
<feature type="binding site" evidence="3">
    <location>
        <position position="242"/>
    </location>
    <ligand>
        <name>S-adenosyl-L-methionine</name>
        <dbReference type="ChEBI" id="CHEBI:59789"/>
    </ligand>
</feature>
<feature type="binding site" evidence="3">
    <location>
        <position position="268"/>
    </location>
    <ligand>
        <name>S-adenosyl-L-methionine</name>
        <dbReference type="ChEBI" id="CHEBI:59789"/>
    </ligand>
</feature>
<feature type="modified residue" description="Phosphoserine" evidence="20 22">
    <location>
        <position position="23"/>
    </location>
</feature>
<feature type="modified residue" description="Phosphoserine; by AURKB" evidence="2">
    <location>
        <position position="139"/>
    </location>
</feature>
<feature type="modified residue" description="Phosphoserine" evidence="2">
    <location>
        <position position="456"/>
    </location>
</feature>
<feature type="modified residue" description="Phosphoserine" evidence="2">
    <location>
        <position position="473"/>
    </location>
</feature>
<feature type="modified residue" description="N6-acetyllysine; alternate" evidence="23">
    <location>
        <position position="585"/>
    </location>
</feature>
<feature type="modified residue" description="N6-malonyllysine; alternate" evidence="1">
    <location>
        <position position="585"/>
    </location>
</feature>
<feature type="modified residue" description="Phosphoserine" evidence="2">
    <location>
        <position position="592"/>
    </location>
</feature>
<feature type="modified residue" description="Phosphothreonine" evidence="22">
    <location>
        <position position="717"/>
    </location>
</feature>
<feature type="modified residue" description="Phosphoserine" evidence="19 21 22">
    <location>
        <position position="723"/>
    </location>
</feature>
<feature type="cross-link" description="Glycyl lysine isopeptide (Lys-Gly) (interchain with G-Cter in SUMO2)" evidence="2">
    <location>
        <position position="46"/>
    </location>
</feature>
<feature type="cross-link" description="Glycyl lysine isopeptide (Lys-Gly) (interchain with G-Cter in SUMO2)" evidence="2">
    <location>
        <position position="510"/>
    </location>
</feature>
<feature type="cross-link" description="Glycyl lysine isopeptide (Lys-Gly) (interchain with G-Cter in SUMO2)" evidence="2">
    <location>
        <position position="515"/>
    </location>
</feature>
<feature type="cross-link" description="Glycyl lysine isopeptide (Lys-Gly) (interchain with G-Cter in SUMO2); alternate" evidence="2">
    <location>
        <position position="585"/>
    </location>
</feature>
<feature type="cross-link" description="Glycyl lysine isopeptide (Lys-Gly) (interchain with G-Cter in SUMO2)" evidence="2">
    <location>
        <position position="639"/>
    </location>
</feature>
<feature type="cross-link" description="Glycyl lysine isopeptide (Lys-Gly) (interchain with G-Cter in SUMO2)" evidence="2">
    <location>
        <position position="653"/>
    </location>
</feature>
<feature type="cross-link" description="Glycyl lysine isopeptide (Lys-Gly) (interchain with G-Cter in SUMO2)" evidence="2">
    <location>
        <position position="659"/>
    </location>
</feature>
<feature type="splice variant" id="VSP_025969" description="In isoform 2." evidence="15">
    <location>
        <begin position="1"/>
        <end position="66"/>
    </location>
</feature>
<feature type="mutagenesis site" description="Loss of RNA methyltransferase activity." evidence="10">
    <original>C</original>
    <variation>A</variation>
    <location>
        <position position="271"/>
    </location>
</feature>
<feature type="sequence conflict" description="In Ref. 2; BAE30795/BAE29720." evidence="17" ref="2">
    <original>F</original>
    <variation>L</variation>
    <location>
        <position position="206"/>
    </location>
</feature>
<feature type="sequence conflict" description="In Ref. 2; BAE30795/BAE29720." evidence="17" ref="2">
    <original>V</original>
    <variation>L</variation>
    <location>
        <position position="253"/>
    </location>
</feature>
<feature type="sequence conflict" description="In Ref. 1; ABF29536 and 3; AAH25549." evidence="17" ref="1 3">
    <original>S</original>
    <variation>L</variation>
    <location>
        <position position="482"/>
    </location>
</feature>
<feature type="sequence conflict" description="In Ref. 1; ABF29536." evidence="17" ref="1">
    <original>N</original>
    <variation>I</variation>
    <location>
        <position position="490"/>
    </location>
</feature>
<protein>
    <recommendedName>
        <fullName evidence="17">RNA cytosine C(5)-methyltransferase NSUN2</fullName>
        <ecNumber evidence="8 10 13 14">2.1.1.-</ecNumber>
    </recommendedName>
    <alternativeName>
        <fullName evidence="16">Myc-induced SUN domain-containing protein</fullName>
        <shortName evidence="16">Misu</shortName>
    </alternativeName>
    <alternativeName>
        <fullName evidence="16">NOL1/NOP2/Sun domain family member 2</fullName>
    </alternativeName>
    <alternativeName>
        <fullName evidence="17">mRNA cytosine C(5)-methyltransferase</fullName>
        <ecNumber evidence="10">2.1.1.-</ecNumber>
    </alternativeName>
    <alternativeName>
        <fullName evidence="17">tRNA cytosine C(5)-methyltransferase</fullName>
        <ecNumber evidence="8 10 13 14">2.1.1.-</ecNumber>
        <ecNumber evidence="8">2.1.1.203</ecNumber>
    </alternativeName>
</protein>
<proteinExistence type="evidence at protein level"/>
<accession>Q1HFZ0</accession>
<accession>A0PJD6</accession>
<accession>Q3U972</accession>
<accession>Q8BPG9</accession>
<accession>Q8CDF9</accession>
<accession>Q91YX9</accession>
<sequence>MGRRARGRRFQQPPQPEGEEDASDGGRKRGQAGWEGGYPEIVKENKLFEHYYQELKIVPEGEWDQFMESLREPLPATLRITGYKSHAKEILHCLKNKYFKELEDLEVDGQKVEVPQPLSWYPEELAWHTNLSRKILRKSPLLAKFHQFLVSETESGNISRQEAVSMIPPLLLNVEPHHKILDMCAAPGSKTTQLIEMLHADMSVPFPEGFVIANDVDNKRCYLLVHQAKRLSSPCIMVVNHDASSIPRLTVDVDGRKEILFYDRILCDVPCSGDGTMRKNIDVWKKWTTLNSLQLHGLQLRIATRGAEQLAEGGRMVYSTCSLNPVEDEAVIAALLEKSEGALELADVSAELPGLKWMPGVSQWKVMTRDGQWFADWHEVPQGRHTQIRPTMFPPTDLEKLQAMHLERCLRILPHHQNTGGFFVAVLVKKAPMPWNKRQPKVQNKSAEAREPRVSSHVAATEGNPSDQSELESQMITGAGDSETAHNTENTESNEKKDGVCGPPPSKKMKLFGFKEDPFVFIPEDDPLFPPIEKFYALDPSFPRMNLLTRTTEGKKRQLYMVSKELRNVLLNNSEKMKVINTGIKVWCRNNSGEEFDCAFRLAQEGIYTLYPFINSRIITVSMEDVKTLLTQENPFFRKLSSEAYSQVKDLAKGSVVLKYEPDSANPDTLQCPIVLCGWRGKASIRTFVPKNERLHYLRMMGLEVLGEKKKEGVILTNENAASPEQPGDEDAKQTAQDPCVPDSVPGCDAAAAEPSR</sequence>